<reference key="1">
    <citation type="journal article" date="1997" name="Science">
        <title>The complete genome sequence of Escherichia coli K-12.</title>
        <authorList>
            <person name="Blattner F.R."/>
            <person name="Plunkett G. III"/>
            <person name="Bloch C.A."/>
            <person name="Perna N.T."/>
            <person name="Burland V."/>
            <person name="Riley M."/>
            <person name="Collado-Vides J."/>
            <person name="Glasner J.D."/>
            <person name="Rode C.K."/>
            <person name="Mayhew G.F."/>
            <person name="Gregor J."/>
            <person name="Davis N.W."/>
            <person name="Kirkpatrick H.A."/>
            <person name="Goeden M.A."/>
            <person name="Rose D.J."/>
            <person name="Mau B."/>
            <person name="Shao Y."/>
        </authorList>
    </citation>
    <scope>NUCLEOTIDE SEQUENCE [LARGE SCALE GENOMIC DNA]</scope>
    <source>
        <strain>K12 / MG1655 / ATCC 47076</strain>
    </source>
</reference>
<reference key="2">
    <citation type="journal article" date="2006" name="Mol. Syst. Biol.">
        <title>Highly accurate genome sequences of Escherichia coli K-12 strains MG1655 and W3110.</title>
        <authorList>
            <person name="Hayashi K."/>
            <person name="Morooka N."/>
            <person name="Yamamoto Y."/>
            <person name="Fujita K."/>
            <person name="Isono K."/>
            <person name="Choi S."/>
            <person name="Ohtsubo E."/>
            <person name="Baba T."/>
            <person name="Wanner B.L."/>
            <person name="Mori H."/>
            <person name="Horiuchi T."/>
        </authorList>
    </citation>
    <scope>NUCLEOTIDE SEQUENCE [LARGE SCALE GENOMIC DNA]</scope>
    <source>
        <strain>K12 / W3110 / ATCC 27325 / DSM 5911</strain>
    </source>
</reference>
<reference key="3">
    <citation type="journal article" date="2005" name="Science">
        <title>Global topology analysis of the Escherichia coli inner membrane proteome.</title>
        <authorList>
            <person name="Daley D.O."/>
            <person name="Rapp M."/>
            <person name="Granseth E."/>
            <person name="Melen K."/>
            <person name="Drew D."/>
            <person name="von Heijne G."/>
        </authorList>
    </citation>
    <scope>SUBCELLULAR LOCATION</scope>
    <scope>TOPOLOGY [LARGE SCALE ANALYSIS]</scope>
    <source>
        <strain>K12 / MG1655 / ATCC 47076</strain>
    </source>
</reference>
<name>YQFA_ECOLI</name>
<evidence type="ECO:0000255" key="1"/>
<evidence type="ECO:0000269" key="2">
    <source>
    </source>
</evidence>
<evidence type="ECO:0000305" key="3"/>
<evidence type="ECO:0000305" key="4">
    <source>
    </source>
</evidence>
<proteinExistence type="evidence at protein level"/>
<sequence>MVQKPLIKQGYSLAEEIANSVSHGIGLVFGIVGLVLLLVQAVDLNASATAITSYSLYGGSMILLFLASTLYHAIPHQRAKMWLKKFDHCAIYLLIAGTYTPFLLVGLDSPLARGLMIVIWSLALLGILFKLTIAHRFKILSLVTYLAMGWLSLVVIYEMAVKLAAGSVTLLAVGGVVYSLGVIFYVCKRIPYNHAIWHGFVLGGSVCHFLAIYLYIGQA</sequence>
<accession>P67153</accession>
<accession>Q2M9U2</accession>
<accession>Q46827</accession>
<organism>
    <name type="scientific">Escherichia coli (strain K12)</name>
    <dbReference type="NCBI Taxonomy" id="83333"/>
    <lineage>
        <taxon>Bacteria</taxon>
        <taxon>Pseudomonadati</taxon>
        <taxon>Pseudomonadota</taxon>
        <taxon>Gammaproteobacteria</taxon>
        <taxon>Enterobacterales</taxon>
        <taxon>Enterobacteriaceae</taxon>
        <taxon>Escherichia</taxon>
    </lineage>
</organism>
<comment type="subcellular location">
    <subcellularLocation>
        <location evidence="2">Cell inner membrane</location>
        <topology>Multi-pass membrane protein</topology>
    </subcellularLocation>
</comment>
<comment type="similarity">
    <text evidence="3">Belongs to the UPF0073 (Hly-III) family.</text>
</comment>
<dbReference type="EMBL" id="U28375">
    <property type="protein sequence ID" value="AAA83080.1"/>
    <property type="molecule type" value="Genomic_DNA"/>
</dbReference>
<dbReference type="EMBL" id="U00096">
    <property type="protein sequence ID" value="AAC75937.1"/>
    <property type="molecule type" value="Genomic_DNA"/>
</dbReference>
<dbReference type="EMBL" id="AP009048">
    <property type="protein sequence ID" value="BAE76964.1"/>
    <property type="molecule type" value="Genomic_DNA"/>
</dbReference>
<dbReference type="PIR" id="C65074">
    <property type="entry name" value="C65074"/>
</dbReference>
<dbReference type="RefSeq" id="NP_417375.1">
    <property type="nucleotide sequence ID" value="NC_000913.3"/>
</dbReference>
<dbReference type="SMR" id="P67153"/>
<dbReference type="BioGRID" id="4261705">
    <property type="interactions" value="10"/>
</dbReference>
<dbReference type="FunCoup" id="P67153">
    <property type="interactions" value="115"/>
</dbReference>
<dbReference type="STRING" id="511145.b2899"/>
<dbReference type="TCDB" id="1.C.113.1.10">
    <property type="family name" value="the hemolysin iii (hly iii) family"/>
</dbReference>
<dbReference type="PaxDb" id="511145-b2899"/>
<dbReference type="EnsemblBacteria" id="AAC75937">
    <property type="protein sequence ID" value="AAC75937"/>
    <property type="gene ID" value="b2899"/>
</dbReference>
<dbReference type="GeneID" id="947381"/>
<dbReference type="KEGG" id="ecj:JW2867"/>
<dbReference type="KEGG" id="eco:b2899"/>
<dbReference type="KEGG" id="ecoc:C3026_15895"/>
<dbReference type="PATRIC" id="fig|1411691.4.peg.3833"/>
<dbReference type="EchoBASE" id="EB2887"/>
<dbReference type="eggNOG" id="COG1272">
    <property type="taxonomic scope" value="Bacteria"/>
</dbReference>
<dbReference type="HOGENOM" id="CLU_051078_1_0_6"/>
<dbReference type="InParanoid" id="P67153"/>
<dbReference type="OMA" id="NAWTHLV"/>
<dbReference type="OrthoDB" id="9813689at2"/>
<dbReference type="PhylomeDB" id="P67153"/>
<dbReference type="BioCyc" id="EcoCyc:G7512-MONOMER"/>
<dbReference type="PRO" id="PR:P67153"/>
<dbReference type="Proteomes" id="UP000000625">
    <property type="component" value="Chromosome"/>
</dbReference>
<dbReference type="GO" id="GO:0005886">
    <property type="term" value="C:plasma membrane"/>
    <property type="evidence" value="ECO:0000314"/>
    <property type="project" value="EcoCyc"/>
</dbReference>
<dbReference type="GO" id="GO:0140911">
    <property type="term" value="F:pore-forming activity"/>
    <property type="evidence" value="ECO:0007669"/>
    <property type="project" value="InterPro"/>
</dbReference>
<dbReference type="GO" id="GO:0042391">
    <property type="term" value="P:regulation of membrane potential"/>
    <property type="evidence" value="ECO:0000315"/>
    <property type="project" value="EcoCyc"/>
</dbReference>
<dbReference type="InterPro" id="IPR004254">
    <property type="entry name" value="AdipoR/HlyIII-related"/>
</dbReference>
<dbReference type="InterPro" id="IPR005744">
    <property type="entry name" value="Hy-lIII"/>
</dbReference>
<dbReference type="NCBIfam" id="TIGR01065">
    <property type="entry name" value="hlyIII"/>
    <property type="match status" value="1"/>
</dbReference>
<dbReference type="NCBIfam" id="NF011669">
    <property type="entry name" value="PRK15087.1"/>
    <property type="match status" value="1"/>
</dbReference>
<dbReference type="PANTHER" id="PTHR20855">
    <property type="entry name" value="ADIPOR/PROGESTIN RECEPTOR-RELATED"/>
    <property type="match status" value="1"/>
</dbReference>
<dbReference type="PANTHER" id="PTHR20855:SF3">
    <property type="entry name" value="LD03007P"/>
    <property type="match status" value="1"/>
</dbReference>
<dbReference type="Pfam" id="PF03006">
    <property type="entry name" value="HlyIII"/>
    <property type="match status" value="1"/>
</dbReference>
<gene>
    <name type="primary">yqfA</name>
    <name type="ordered locus">b2899</name>
    <name type="ordered locus">JW2867</name>
</gene>
<feature type="chain" id="PRO_0000176898" description="UPF0073 inner membrane protein YqfA">
    <location>
        <begin position="1"/>
        <end position="219"/>
    </location>
</feature>
<feature type="topological domain" description="Cytoplasmic" evidence="1">
    <location>
        <begin position="1"/>
        <end position="23"/>
    </location>
</feature>
<feature type="transmembrane region" description="Helical" evidence="1">
    <location>
        <begin position="24"/>
        <end position="44"/>
    </location>
</feature>
<feature type="topological domain" description="Periplasmic" evidence="1">
    <location>
        <begin position="45"/>
        <end position="53"/>
    </location>
</feature>
<feature type="transmembrane region" description="Helical" evidence="1">
    <location>
        <begin position="54"/>
        <end position="74"/>
    </location>
</feature>
<feature type="topological domain" description="Cytoplasmic" evidence="1">
    <location>
        <begin position="75"/>
        <end position="90"/>
    </location>
</feature>
<feature type="transmembrane region" description="Helical" evidence="1">
    <location>
        <begin position="91"/>
        <end position="111"/>
    </location>
</feature>
<feature type="topological domain" description="Periplasmic" evidence="1">
    <location>
        <begin position="112"/>
        <end position="113"/>
    </location>
</feature>
<feature type="transmembrane region" description="Helical" evidence="1">
    <location>
        <begin position="114"/>
        <end position="134"/>
    </location>
</feature>
<feature type="topological domain" description="Cytoplasmic" evidence="1">
    <location>
        <begin position="135"/>
        <end position="138"/>
    </location>
</feature>
<feature type="transmembrane region" description="Helical" evidence="1">
    <location>
        <begin position="139"/>
        <end position="159"/>
    </location>
</feature>
<feature type="topological domain" description="Periplasmic" evidence="1">
    <location>
        <begin position="160"/>
        <end position="165"/>
    </location>
</feature>
<feature type="transmembrane region" description="Helical" evidence="1">
    <location>
        <begin position="166"/>
        <end position="186"/>
    </location>
</feature>
<feature type="topological domain" description="Cytoplasmic" evidence="1">
    <location>
        <begin position="187"/>
        <end position="195"/>
    </location>
</feature>
<feature type="transmembrane region" description="Helical" evidence="1">
    <location>
        <begin position="196"/>
        <end position="216"/>
    </location>
</feature>
<feature type="topological domain" description="Periplasmic" evidence="4">
    <location>
        <begin position="217"/>
        <end position="219"/>
    </location>
</feature>
<protein>
    <recommendedName>
        <fullName>UPF0073 inner membrane protein YqfA</fullName>
    </recommendedName>
</protein>
<keyword id="KW-0997">Cell inner membrane</keyword>
<keyword id="KW-1003">Cell membrane</keyword>
<keyword id="KW-0472">Membrane</keyword>
<keyword id="KW-1185">Reference proteome</keyword>
<keyword id="KW-0812">Transmembrane</keyword>
<keyword id="KW-1133">Transmembrane helix</keyword>